<protein>
    <recommendedName>
        <fullName>Hybrid signal transduction histidine kinase I</fullName>
        <ecNumber>2.7.13.3</ecNumber>
    </recommendedName>
</protein>
<evidence type="ECO:0000250" key="1"/>
<evidence type="ECO:0000255" key="2">
    <source>
        <dbReference type="PROSITE-ProRule" id="PRU00107"/>
    </source>
</evidence>
<evidence type="ECO:0000255" key="3">
    <source>
        <dbReference type="PROSITE-ProRule" id="PRU00141"/>
    </source>
</evidence>
<evidence type="ECO:0000255" key="4">
    <source>
        <dbReference type="PROSITE-ProRule" id="PRU00169"/>
    </source>
</evidence>
<evidence type="ECO:0000256" key="5">
    <source>
        <dbReference type="SAM" id="MobiDB-lite"/>
    </source>
</evidence>
<evidence type="ECO:0000305" key="6"/>
<keyword id="KW-0067">ATP-binding</keyword>
<keyword id="KW-0418">Kinase</keyword>
<keyword id="KW-0547">Nucleotide-binding</keyword>
<keyword id="KW-0597">Phosphoprotein</keyword>
<keyword id="KW-1185">Reference proteome</keyword>
<keyword id="KW-0807">Transducer</keyword>
<keyword id="KW-0808">Transferase</keyword>
<keyword id="KW-0902">Two-component regulatory system</keyword>
<dbReference type="EC" id="2.7.13.3"/>
<dbReference type="EMBL" id="AF362371">
    <property type="protein sequence ID" value="AAK54090.1"/>
    <property type="molecule type" value="Genomic_DNA"/>
</dbReference>
<dbReference type="EMBL" id="AAFI02000010">
    <property type="protein sequence ID" value="EAL70692.1"/>
    <property type="molecule type" value="Genomic_DNA"/>
</dbReference>
<dbReference type="RefSeq" id="XP_644590.1">
    <property type="nucleotide sequence ID" value="XM_639498.1"/>
</dbReference>
<dbReference type="STRING" id="44689.Q86AT9"/>
<dbReference type="GlyGen" id="Q86AT9">
    <property type="glycosylation" value="1 site"/>
</dbReference>
<dbReference type="PaxDb" id="44689-DDB0231984"/>
<dbReference type="EnsemblProtists" id="EAL70692">
    <property type="protein sequence ID" value="EAL70692"/>
    <property type="gene ID" value="DDB_G0273475"/>
</dbReference>
<dbReference type="GeneID" id="8618954"/>
<dbReference type="KEGG" id="ddi:DDB_G0273475"/>
<dbReference type="dictyBase" id="DDB_G0273475">
    <property type="gene designation" value="dhkI-1"/>
</dbReference>
<dbReference type="VEuPathDB" id="AmoebaDB:DDB_G0273475"/>
<dbReference type="VEuPathDB" id="AmoebaDB:DDB_G0295835"/>
<dbReference type="eggNOG" id="KOG0519">
    <property type="taxonomic scope" value="Eukaryota"/>
</dbReference>
<dbReference type="HOGENOM" id="CLU_239956_0_0_1"/>
<dbReference type="InParanoid" id="Q86AT9"/>
<dbReference type="OMA" id="WHRIDAR"/>
<dbReference type="PRO" id="PR:Q86AT9"/>
<dbReference type="Proteomes" id="UP000002195">
    <property type="component" value="Chromosome 2"/>
</dbReference>
<dbReference type="GO" id="GO:0005524">
    <property type="term" value="F:ATP binding"/>
    <property type="evidence" value="ECO:0007669"/>
    <property type="project" value="UniProtKB-KW"/>
</dbReference>
<dbReference type="GO" id="GO:0000155">
    <property type="term" value="F:phosphorelay sensor kinase activity"/>
    <property type="evidence" value="ECO:0007669"/>
    <property type="project" value="InterPro"/>
</dbReference>
<dbReference type="GO" id="GO:0048870">
    <property type="term" value="P:cell motility"/>
    <property type="evidence" value="ECO:0000316"/>
    <property type="project" value="dictyBase"/>
</dbReference>
<dbReference type="GO" id="GO:0043327">
    <property type="term" value="P:chemotaxis to cAMP"/>
    <property type="evidence" value="ECO:0000315"/>
    <property type="project" value="dictyBase"/>
</dbReference>
<dbReference type="GO" id="GO:0030587">
    <property type="term" value="P:sorocarp development"/>
    <property type="evidence" value="ECO:0000315"/>
    <property type="project" value="dictyBase"/>
</dbReference>
<dbReference type="CDD" id="cd00082">
    <property type="entry name" value="HisKA"/>
    <property type="match status" value="1"/>
</dbReference>
<dbReference type="CDD" id="cd17546">
    <property type="entry name" value="REC_hyHK_CKI1_RcsC-like"/>
    <property type="match status" value="1"/>
</dbReference>
<dbReference type="FunFam" id="1.10.287.130:FF:000192">
    <property type="entry name" value="Histidine kinase"/>
    <property type="match status" value="1"/>
</dbReference>
<dbReference type="Gene3D" id="1.10.287.130">
    <property type="match status" value="1"/>
</dbReference>
<dbReference type="Gene3D" id="3.40.50.2300">
    <property type="match status" value="1"/>
</dbReference>
<dbReference type="Gene3D" id="3.30.565.10">
    <property type="entry name" value="Histidine kinase-like ATPase, C-terminal domain"/>
    <property type="match status" value="1"/>
</dbReference>
<dbReference type="Gene3D" id="3.30.450.20">
    <property type="entry name" value="PAS domain"/>
    <property type="match status" value="2"/>
</dbReference>
<dbReference type="InterPro" id="IPR011006">
    <property type="entry name" value="CheY-like_superfamily"/>
</dbReference>
<dbReference type="InterPro" id="IPR036890">
    <property type="entry name" value="HATPase_C_sf"/>
</dbReference>
<dbReference type="InterPro" id="IPR005467">
    <property type="entry name" value="His_kinase_dom"/>
</dbReference>
<dbReference type="InterPro" id="IPR003661">
    <property type="entry name" value="HisK_dim/P_dom"/>
</dbReference>
<dbReference type="InterPro" id="IPR036097">
    <property type="entry name" value="HisK_dim/P_sf"/>
</dbReference>
<dbReference type="InterPro" id="IPR000700">
    <property type="entry name" value="PAS-assoc_C"/>
</dbReference>
<dbReference type="InterPro" id="IPR035965">
    <property type="entry name" value="PAS-like_dom_sf"/>
</dbReference>
<dbReference type="InterPro" id="IPR004358">
    <property type="entry name" value="Sig_transdc_His_kin-like_C"/>
</dbReference>
<dbReference type="InterPro" id="IPR001789">
    <property type="entry name" value="Sig_transdc_resp-reg_receiver"/>
</dbReference>
<dbReference type="PANTHER" id="PTHR45339:SF5">
    <property type="entry name" value="HISTIDINE KINASE"/>
    <property type="match status" value="1"/>
</dbReference>
<dbReference type="PANTHER" id="PTHR45339">
    <property type="entry name" value="HYBRID SIGNAL TRANSDUCTION HISTIDINE KINASE J"/>
    <property type="match status" value="1"/>
</dbReference>
<dbReference type="Pfam" id="PF02518">
    <property type="entry name" value="HATPase_c"/>
    <property type="match status" value="1"/>
</dbReference>
<dbReference type="Pfam" id="PF00512">
    <property type="entry name" value="HisKA"/>
    <property type="match status" value="1"/>
</dbReference>
<dbReference type="Pfam" id="PF00072">
    <property type="entry name" value="Response_reg"/>
    <property type="match status" value="1"/>
</dbReference>
<dbReference type="PRINTS" id="PR00344">
    <property type="entry name" value="BCTRLSENSOR"/>
</dbReference>
<dbReference type="SMART" id="SM00387">
    <property type="entry name" value="HATPase_c"/>
    <property type="match status" value="1"/>
</dbReference>
<dbReference type="SMART" id="SM00388">
    <property type="entry name" value="HisKA"/>
    <property type="match status" value="1"/>
</dbReference>
<dbReference type="SMART" id="SM00448">
    <property type="entry name" value="REC"/>
    <property type="match status" value="1"/>
</dbReference>
<dbReference type="SUPFAM" id="SSF55874">
    <property type="entry name" value="ATPase domain of HSP90 chaperone/DNA topoisomerase II/histidine kinase"/>
    <property type="match status" value="2"/>
</dbReference>
<dbReference type="SUPFAM" id="SSF52172">
    <property type="entry name" value="CheY-like"/>
    <property type="match status" value="1"/>
</dbReference>
<dbReference type="SUPFAM" id="SSF47384">
    <property type="entry name" value="Homodimeric domain of signal transducing histidine kinase"/>
    <property type="match status" value="1"/>
</dbReference>
<dbReference type="SUPFAM" id="SSF55785">
    <property type="entry name" value="PYP-like sensor domain (PAS domain)"/>
    <property type="match status" value="2"/>
</dbReference>
<dbReference type="PROSITE" id="PS50109">
    <property type="entry name" value="HIS_KIN"/>
    <property type="match status" value="1"/>
</dbReference>
<dbReference type="PROSITE" id="PS50113">
    <property type="entry name" value="PAC"/>
    <property type="match status" value="1"/>
</dbReference>
<dbReference type="PROSITE" id="PS50110">
    <property type="entry name" value="RESPONSE_REGULATORY"/>
    <property type="match status" value="1"/>
</dbReference>
<gene>
    <name type="primary">dhkI-1</name>
    <name type="ORF">DDB_G0273475</name>
</gene>
<gene>
    <name type="primary">dhkI-2</name>
    <name type="ORF">DDB_G0295835</name>
</gene>
<reference key="1">
    <citation type="book" date="2001" name="Histidine kinases in signal transduction">
        <title>The histidine kinases of Dictyostelium.</title>
        <editorList>
            <person name="Inouye M."/>
            <person name="Dutta R."/>
        </editorList>
        <authorList>
            <person name="Anjard C."/>
            <person name="Loomis W.F."/>
        </authorList>
    </citation>
    <scope>NUCLEOTIDE SEQUENCE [GENOMIC DNA]</scope>
    <source>
        <strain>AX4</strain>
    </source>
</reference>
<reference key="2">
    <citation type="journal article" date="2002" name="Nature">
        <title>Sequence and analysis of chromosome 2 of Dictyostelium discoideum.</title>
        <authorList>
            <person name="Gloeckner G."/>
            <person name="Eichinger L."/>
            <person name="Szafranski K."/>
            <person name="Pachebat J.A."/>
            <person name="Bankier A.T."/>
            <person name="Dear P.H."/>
            <person name="Lehmann R."/>
            <person name="Baumgart C."/>
            <person name="Parra G."/>
            <person name="Abril J.F."/>
            <person name="Guigo R."/>
            <person name="Kumpf K."/>
            <person name="Tunggal B."/>
            <person name="Cox E.C."/>
            <person name="Quail M.A."/>
            <person name="Platzer M."/>
            <person name="Rosenthal A."/>
            <person name="Noegel A.A."/>
        </authorList>
    </citation>
    <scope>NUCLEOTIDE SEQUENCE [LARGE SCALE GENOMIC DNA]</scope>
    <source>
        <strain>AX4</strain>
    </source>
</reference>
<reference key="3">
    <citation type="journal article" date="2005" name="Nature">
        <title>The genome of the social amoeba Dictyostelium discoideum.</title>
        <authorList>
            <person name="Eichinger L."/>
            <person name="Pachebat J.A."/>
            <person name="Gloeckner G."/>
            <person name="Rajandream M.A."/>
            <person name="Sucgang R."/>
            <person name="Berriman M."/>
            <person name="Song J."/>
            <person name="Olsen R."/>
            <person name="Szafranski K."/>
            <person name="Xu Q."/>
            <person name="Tunggal B."/>
            <person name="Kummerfeld S."/>
            <person name="Madera M."/>
            <person name="Konfortov B.A."/>
            <person name="Rivero F."/>
            <person name="Bankier A.T."/>
            <person name="Lehmann R."/>
            <person name="Hamlin N."/>
            <person name="Davies R."/>
            <person name="Gaudet P."/>
            <person name="Fey P."/>
            <person name="Pilcher K."/>
            <person name="Chen G."/>
            <person name="Saunders D."/>
            <person name="Sodergren E.J."/>
            <person name="Davis P."/>
            <person name="Kerhornou A."/>
            <person name="Nie X."/>
            <person name="Hall N."/>
            <person name="Anjard C."/>
            <person name="Hemphill L."/>
            <person name="Bason N."/>
            <person name="Farbrother P."/>
            <person name="Desany B."/>
            <person name="Just E."/>
            <person name="Morio T."/>
            <person name="Rost R."/>
            <person name="Churcher C.M."/>
            <person name="Cooper J."/>
            <person name="Haydock S."/>
            <person name="van Driessche N."/>
            <person name="Cronin A."/>
            <person name="Goodhead I."/>
            <person name="Muzny D.M."/>
            <person name="Mourier T."/>
            <person name="Pain A."/>
            <person name="Lu M."/>
            <person name="Harper D."/>
            <person name="Lindsay R."/>
            <person name="Hauser H."/>
            <person name="James K.D."/>
            <person name="Quiles M."/>
            <person name="Madan Babu M."/>
            <person name="Saito T."/>
            <person name="Buchrieser C."/>
            <person name="Wardroper A."/>
            <person name="Felder M."/>
            <person name="Thangavelu M."/>
            <person name="Johnson D."/>
            <person name="Knights A."/>
            <person name="Loulseged H."/>
            <person name="Mungall K.L."/>
            <person name="Oliver K."/>
            <person name="Price C."/>
            <person name="Quail M.A."/>
            <person name="Urushihara H."/>
            <person name="Hernandez J."/>
            <person name="Rabbinowitsch E."/>
            <person name="Steffen D."/>
            <person name="Sanders M."/>
            <person name="Ma J."/>
            <person name="Kohara Y."/>
            <person name="Sharp S."/>
            <person name="Simmonds M.N."/>
            <person name="Spiegler S."/>
            <person name="Tivey A."/>
            <person name="Sugano S."/>
            <person name="White B."/>
            <person name="Walker D."/>
            <person name="Woodward J.R."/>
            <person name="Winckler T."/>
            <person name="Tanaka Y."/>
            <person name="Shaulsky G."/>
            <person name="Schleicher M."/>
            <person name="Weinstock G.M."/>
            <person name="Rosenthal A."/>
            <person name="Cox E.C."/>
            <person name="Chisholm R.L."/>
            <person name="Gibbs R.A."/>
            <person name="Loomis W.F."/>
            <person name="Platzer M."/>
            <person name="Kay R.R."/>
            <person name="Williams J.G."/>
            <person name="Dear P.H."/>
            <person name="Noegel A.A."/>
            <person name="Barrell B.G."/>
            <person name="Kuspa A."/>
        </authorList>
    </citation>
    <scope>NUCLEOTIDE SEQUENCE [LARGE SCALE GENOMIC DNA]</scope>
    <source>
        <strain>AX4</strain>
    </source>
</reference>
<accession>Q86AT9</accession>
<accession>Q557P4</accession>
<accession>Q95PH7</accession>
<feature type="chain" id="PRO_0000328339" description="Hybrid signal transduction histidine kinase I">
    <location>
        <begin position="1"/>
        <end position="1736"/>
    </location>
</feature>
<feature type="domain" description="PAC" evidence="3">
    <location>
        <begin position="234"/>
        <end position="286"/>
    </location>
</feature>
<feature type="domain" description="PAS">
    <location>
        <begin position="287"/>
        <end position="358"/>
    </location>
</feature>
<feature type="domain" description="Histidine kinase" evidence="2">
    <location>
        <begin position="556"/>
        <end position="908"/>
    </location>
</feature>
<feature type="domain" description="Response regulatory" evidence="4">
    <location>
        <begin position="1551"/>
        <end position="1674"/>
    </location>
</feature>
<feature type="region of interest" description="Disordered" evidence="5">
    <location>
        <begin position="143"/>
        <end position="171"/>
    </location>
</feature>
<feature type="region of interest" description="Disordered" evidence="5">
    <location>
        <begin position="378"/>
        <end position="469"/>
    </location>
</feature>
<feature type="region of interest" description="Disordered" evidence="5">
    <location>
        <begin position="711"/>
        <end position="821"/>
    </location>
</feature>
<feature type="region of interest" description="Disordered" evidence="5">
    <location>
        <begin position="952"/>
        <end position="971"/>
    </location>
</feature>
<feature type="region of interest" description="Disordered" evidence="5">
    <location>
        <begin position="1080"/>
        <end position="1124"/>
    </location>
</feature>
<feature type="region of interest" description="Disordered" evidence="5">
    <location>
        <begin position="1157"/>
        <end position="1258"/>
    </location>
</feature>
<feature type="region of interest" description="Disordered" evidence="5">
    <location>
        <begin position="1277"/>
        <end position="1301"/>
    </location>
</feature>
<feature type="region of interest" description="Disordered" evidence="5">
    <location>
        <begin position="1330"/>
        <end position="1393"/>
    </location>
</feature>
<feature type="region of interest" description="Disordered" evidence="5">
    <location>
        <begin position="1419"/>
        <end position="1520"/>
    </location>
</feature>
<feature type="region of interest" description="Disordered" evidence="5">
    <location>
        <begin position="1695"/>
        <end position="1736"/>
    </location>
</feature>
<feature type="compositionally biased region" description="Low complexity" evidence="5">
    <location>
        <begin position="143"/>
        <end position="161"/>
    </location>
</feature>
<feature type="compositionally biased region" description="Low complexity" evidence="5">
    <location>
        <begin position="379"/>
        <end position="389"/>
    </location>
</feature>
<feature type="compositionally biased region" description="Polar residues" evidence="5">
    <location>
        <begin position="392"/>
        <end position="412"/>
    </location>
</feature>
<feature type="compositionally biased region" description="Low complexity" evidence="5">
    <location>
        <begin position="413"/>
        <end position="469"/>
    </location>
</feature>
<feature type="compositionally biased region" description="Acidic residues" evidence="5">
    <location>
        <begin position="725"/>
        <end position="735"/>
    </location>
</feature>
<feature type="compositionally biased region" description="Acidic residues" evidence="5">
    <location>
        <begin position="758"/>
        <end position="789"/>
    </location>
</feature>
<feature type="compositionally biased region" description="Low complexity" evidence="5">
    <location>
        <begin position="790"/>
        <end position="807"/>
    </location>
</feature>
<feature type="compositionally biased region" description="Low complexity" evidence="5">
    <location>
        <begin position="961"/>
        <end position="971"/>
    </location>
</feature>
<feature type="compositionally biased region" description="Low complexity" evidence="5">
    <location>
        <begin position="1080"/>
        <end position="1096"/>
    </location>
</feature>
<feature type="compositionally biased region" description="Polar residues" evidence="5">
    <location>
        <begin position="1097"/>
        <end position="1117"/>
    </location>
</feature>
<feature type="compositionally biased region" description="Low complexity" evidence="5">
    <location>
        <begin position="1186"/>
        <end position="1195"/>
    </location>
</feature>
<feature type="compositionally biased region" description="Low complexity" evidence="5">
    <location>
        <begin position="1202"/>
        <end position="1258"/>
    </location>
</feature>
<feature type="compositionally biased region" description="Polar residues" evidence="5">
    <location>
        <begin position="1330"/>
        <end position="1339"/>
    </location>
</feature>
<feature type="compositionally biased region" description="Low complexity" evidence="5">
    <location>
        <begin position="1340"/>
        <end position="1376"/>
    </location>
</feature>
<feature type="compositionally biased region" description="Low complexity" evidence="5">
    <location>
        <begin position="1425"/>
        <end position="1475"/>
    </location>
</feature>
<feature type="compositionally biased region" description="Low complexity" evidence="5">
    <location>
        <begin position="1482"/>
        <end position="1492"/>
    </location>
</feature>
<feature type="compositionally biased region" description="Low complexity" evidence="5">
    <location>
        <begin position="1506"/>
        <end position="1520"/>
    </location>
</feature>
<feature type="compositionally biased region" description="Low complexity" evidence="5">
    <location>
        <begin position="1695"/>
        <end position="1722"/>
    </location>
</feature>
<feature type="modified residue" description="Phosphohistidine; by autocatalysis" evidence="2">
    <location>
        <position position="559"/>
    </location>
</feature>
<feature type="modified residue" description="4-aspartylphosphate" evidence="4">
    <location>
        <position position="1605"/>
    </location>
</feature>
<feature type="sequence conflict" description="In Ref. 1; AAK54090." evidence="6" ref="1">
    <original>T</original>
    <variation>P</variation>
    <location>
        <position position="1559"/>
    </location>
</feature>
<organism>
    <name type="scientific">Dictyostelium discoideum</name>
    <name type="common">Social amoeba</name>
    <dbReference type="NCBI Taxonomy" id="44689"/>
    <lineage>
        <taxon>Eukaryota</taxon>
        <taxon>Amoebozoa</taxon>
        <taxon>Evosea</taxon>
        <taxon>Eumycetozoa</taxon>
        <taxon>Dictyostelia</taxon>
        <taxon>Dictyosteliales</taxon>
        <taxon>Dictyosteliaceae</taxon>
        <taxon>Dictyostelium</taxon>
    </lineage>
</organism>
<proteinExistence type="inferred from homology"/>
<sequence length="1736" mass="191865">MIYLKILEKLNQAIWLFDINKRVLIWGNQSCKKYKNIESITSLFNNSNLINDIRNGKSKHEHIDIIESNENGEILKQMIFKYSSIHISDMDARQLYLDTSINLLVNQDSHYLDYEGKRIFILVEAIEEIKFIQSPLSSSIENHNINNNQNNQNSVNINSSNKGQYNRPEPSNMGSWEWNVQNDTTKASNQFYKIIGIENDFNKKLNFNDFINKLGIQEIQPIINNCIESNSSSFEYPLRINRKNDNLVRYIQLKGEIIKKDDKVFKVLGVCHDFSEIQEAKDKLEEESKFVEALIGCLKAGIVACNSNGDLTHFNKSAQDLHGLELNDKTDRKQLLDQILKCYRSPYEQINLEKSGTPIIRALSGEFINDQEIIITPTSNQQQSSLSKSNRPRSQSNCSNGNKSQNRLSKNYSTTTTTTNNNNNNNNNNNNNNNNNNNNNSISQQQQTQVSTQQTQQQQNTTNGIGGATTSTTAAAATITSPQQIPIATKIPTKINDNEFLVLASGQEIVSKDGKTIGAFVALHDITERKRNEVILKNATEEAQRANQLKGEFLANISHELLSPMNSIIGMVGLCLDVAPRNLKEMLNDVVESSKILLDLLHQILDFTTLESNSLAVRPFPFKLRDTFNQLFKVFYTRIIEKKISLTFSIDPNIADDFYGDQNRLKQILSNLIDNAIKFSNSSNINNSISIIVEQLTHNQFKKYKDSFRSNSKTHSRLNSHDDYSIDGDYDDQDNNDSYFGRDINVSDNESAVGGFSELDEKDNSDDDDENDDENDETDENDDDTDDDTSSNTSRNNISNNLLFHNNTSGGGGGGINKREKFKKKDREGFVNLKFSIKDRGIGVPEDKHDFIFDRFFQVDGSYSRVQGGVGLGLSICKKLIEFFGGAIWFESEASQGSTFHFILSIKSVEAPSPKSPSLQSSNGSINSTTKLFESSRLKNEIYIPSLPNVQTKKVKKDSNDNGNNDSTNYGISLSNSMNNININGSTLNNNNSINNNNNSNDNGPLTSRTPSNSYYNFIASLNNTSLKSSSHNTLSSSPTGFNGISNLNISGLNNLSNLSNNPNNLNNIIGNTNGNNNTNGNNNSGISLNNSNNNIQTPNGLNNSRGSSLISTPSTKNVKKQHSCPMDLIQRIHSICTPRGPISKECGLNNLPAYSPPKSPGRSLSHGGKNYSNLISTPRGGVGYSSPPINSSSSSGGGSSTNGSNSGNSSANNSTPSSSSLSSTPLTSSNTPSPVSISSNNVNNNNQQQQTQPILSPILPLKDNSIDISDLNNINSLTPNSSNSTSTNVTQSSSNIINNGNSITIINNNPVTPNGKKIVIVPLLSLQSASSPKQSQRGYSPKQQYSPKQYSPKQQYSPKQYSPKQQQQQQQQQQQLEQLSGRMSPHKSNLSSTNLHHIHHHHIHQQQSQQHNNTTVHSNNLILNNNNNNNNNNNNNNNNNNNNNNNNNNNNNNTTNTSNNHTSDPSKSSNSTPETSPPISSPRSNNNNNCSLTTIVGVTTPPQPSSTITTPQFQSPPILSGNSGNINLLSSNGTSSGGIEISGSQMIPQKVLVAEDNTMNQKLIKTLLTKRGFDITIAKDGKQALDFYHESKNKSILYDCILMDIQMPILSGLEATCAIREIEANEGGHIPIIAVTAHAMKGDKEKFLESGVDDYVTKPINPKLLYEVINTQICKYIEENRSSSTINENKNTINNNNNNTNNNNNNNNSSNPVNNNNSNSIDATQQELNNEKIRI</sequence>
<comment type="function">
    <text evidence="1">Acts as a receptor histidine kinase for a signal transduction pathway. This protein undergoes an ATP-dependent autophosphorylation at a conserved histidine residue in the kinase core, and a phosphoryl group is then transferred to a conserved aspartate residue in the receiver domain (By similarity).</text>
</comment>
<comment type="catalytic activity">
    <reaction>
        <text>ATP + protein L-histidine = ADP + protein N-phospho-L-histidine.</text>
        <dbReference type="EC" id="2.7.13.3"/>
    </reaction>
</comment>
<comment type="PTM">
    <text evidence="1">Activation probably requires transfer of a phosphate group between a histidine in the kinase core (transmitter) domain and an aspartate of the receiver domain.</text>
</comment>
<comment type="caution">
    <text evidence="6">The gene for this protein is duplicated in strains AX3 and AX4. These strains contain a duplication of a segment of 750 kb of chromosome 2 compared to the corresponding sequence in strain AX2.</text>
</comment>
<name>DHKI_DICDI</name>